<dbReference type="EC" id="3.1.4.11" evidence="10 11"/>
<dbReference type="EMBL" id="U09117">
    <property type="protein sequence ID" value="AAA73567.1"/>
    <property type="molecule type" value="mRNA"/>
</dbReference>
<dbReference type="EMBL" id="AK090774">
    <property type="protein sequence ID" value="BAG52226.1"/>
    <property type="molecule type" value="mRNA"/>
</dbReference>
<dbReference type="EMBL" id="AC144536">
    <property type="status" value="NOT_ANNOTATED_CDS"/>
    <property type="molecule type" value="Genomic_DNA"/>
</dbReference>
<dbReference type="EMBL" id="CH471055">
    <property type="protein sequence ID" value="EAW64507.1"/>
    <property type="molecule type" value="Genomic_DNA"/>
</dbReference>
<dbReference type="EMBL" id="BC050382">
    <property type="protein sequence ID" value="AAH50382.2"/>
    <property type="molecule type" value="mRNA"/>
</dbReference>
<dbReference type="CCDS" id="CCDS2671.1">
    <molecule id="P51178-1"/>
</dbReference>
<dbReference type="CCDS" id="CCDS46793.1">
    <molecule id="P51178-2"/>
</dbReference>
<dbReference type="PIR" id="A55943">
    <property type="entry name" value="A55943"/>
</dbReference>
<dbReference type="RefSeq" id="NP_001124436.1">
    <molecule id="P51178-2"/>
    <property type="nucleotide sequence ID" value="NM_001130964.2"/>
</dbReference>
<dbReference type="RefSeq" id="NP_006216.2">
    <molecule id="P51178-1"/>
    <property type="nucleotide sequence ID" value="NM_006225.4"/>
</dbReference>
<dbReference type="SMR" id="P51178"/>
<dbReference type="BioGRID" id="111349">
    <property type="interactions" value="81"/>
</dbReference>
<dbReference type="FunCoup" id="P51178">
    <property type="interactions" value="677"/>
</dbReference>
<dbReference type="IntAct" id="P51178">
    <property type="interactions" value="40"/>
</dbReference>
<dbReference type="MINT" id="P51178"/>
<dbReference type="STRING" id="9606.ENSP00000430344"/>
<dbReference type="BindingDB" id="P51178"/>
<dbReference type="ChEMBL" id="CHEMBL3727"/>
<dbReference type="DrugBank" id="DB03401">
    <property type="generic name" value="1D-myo-inositol 1,4,5-trisphosphate"/>
</dbReference>
<dbReference type="DrugBank" id="DB03956">
    <property type="generic name" value="Inositol 2,4,5-trisphosphate"/>
</dbReference>
<dbReference type="SwissLipids" id="SLP:000001065"/>
<dbReference type="GlyCosmos" id="P51178">
    <property type="glycosylation" value="2 sites, No reported glycans"/>
</dbReference>
<dbReference type="GlyGen" id="P51178">
    <property type="glycosylation" value="6 sites, 1 O-linked glycan (3 sites)"/>
</dbReference>
<dbReference type="iPTMnet" id="P51178"/>
<dbReference type="PhosphoSitePlus" id="P51178"/>
<dbReference type="SwissPalm" id="P51178"/>
<dbReference type="BioMuta" id="PLCD1"/>
<dbReference type="DMDM" id="206729887"/>
<dbReference type="REPRODUCTION-2DPAGE" id="IPI00746030"/>
<dbReference type="jPOST" id="P51178"/>
<dbReference type="MassIVE" id="P51178"/>
<dbReference type="PaxDb" id="9606-ENSP00000430344"/>
<dbReference type="PeptideAtlas" id="P51178"/>
<dbReference type="ProteomicsDB" id="56300">
    <molecule id="P51178-1"/>
</dbReference>
<dbReference type="ProteomicsDB" id="56301">
    <molecule id="P51178-2"/>
</dbReference>
<dbReference type="Pumba" id="P51178"/>
<dbReference type="Antibodypedia" id="4086">
    <property type="antibodies" value="171 antibodies from 26 providers"/>
</dbReference>
<dbReference type="DNASU" id="5333"/>
<dbReference type="Ensembl" id="ENST00000334661.5">
    <molecule id="P51178-1"/>
    <property type="protein sequence ID" value="ENSP00000335600.4"/>
    <property type="gene ID" value="ENSG00000187091.14"/>
</dbReference>
<dbReference type="Ensembl" id="ENST00000463876.5">
    <molecule id="P51178-2"/>
    <property type="protein sequence ID" value="ENSP00000430344.1"/>
    <property type="gene ID" value="ENSG00000187091.14"/>
</dbReference>
<dbReference type="GeneID" id="5333"/>
<dbReference type="KEGG" id="hsa:5333"/>
<dbReference type="MANE-Select" id="ENST00000334661.5">
    <property type="protein sequence ID" value="ENSP00000335600.4"/>
    <property type="RefSeq nucleotide sequence ID" value="NM_006225.4"/>
    <property type="RefSeq protein sequence ID" value="NP_006216.2"/>
</dbReference>
<dbReference type="UCSC" id="uc003chm.4">
    <molecule id="P51178-1"/>
    <property type="organism name" value="human"/>
</dbReference>
<dbReference type="AGR" id="HGNC:9060"/>
<dbReference type="CTD" id="5333"/>
<dbReference type="DisGeNET" id="5333"/>
<dbReference type="GeneCards" id="PLCD1"/>
<dbReference type="HGNC" id="HGNC:9060">
    <property type="gene designation" value="PLCD1"/>
</dbReference>
<dbReference type="HPA" id="ENSG00000187091">
    <property type="expression patterns" value="Low tissue specificity"/>
</dbReference>
<dbReference type="MalaCards" id="PLCD1"/>
<dbReference type="MIM" id="151600">
    <property type="type" value="phenotype"/>
</dbReference>
<dbReference type="MIM" id="602142">
    <property type="type" value="gene"/>
</dbReference>
<dbReference type="neXtProt" id="NX_P51178"/>
<dbReference type="OpenTargets" id="ENSG00000187091"/>
<dbReference type="Orphanet" id="2387">
    <property type="disease" value="Leukonychia totalis"/>
</dbReference>
<dbReference type="PharmGKB" id="PA33388"/>
<dbReference type="VEuPathDB" id="HostDB:ENSG00000187091"/>
<dbReference type="eggNOG" id="KOG0169">
    <property type="taxonomic scope" value="Eukaryota"/>
</dbReference>
<dbReference type="GeneTree" id="ENSGT00940000158392"/>
<dbReference type="HOGENOM" id="CLU_002738_0_2_1"/>
<dbReference type="InParanoid" id="P51178"/>
<dbReference type="OMA" id="HWQREMS"/>
<dbReference type="OrthoDB" id="269822at2759"/>
<dbReference type="PAN-GO" id="P51178">
    <property type="GO annotations" value="2 GO annotations based on evolutionary models"/>
</dbReference>
<dbReference type="PhylomeDB" id="P51178"/>
<dbReference type="TreeFam" id="TF313216"/>
<dbReference type="BioCyc" id="MetaCyc:HS07195-MONOMER"/>
<dbReference type="BRENDA" id="3.1.4.11">
    <property type="organism ID" value="2681"/>
</dbReference>
<dbReference type="PathwayCommons" id="P51178"/>
<dbReference type="Reactome" id="R-HSA-1855204">
    <property type="pathway name" value="Synthesis of IP3 and IP4 in the cytosol"/>
</dbReference>
<dbReference type="SignaLink" id="P51178"/>
<dbReference type="BioGRID-ORCS" id="5333">
    <property type="hits" value="11 hits in 1160 CRISPR screens"/>
</dbReference>
<dbReference type="CD-CODE" id="FB4E32DD">
    <property type="entry name" value="Presynaptic clusters and postsynaptic densities"/>
</dbReference>
<dbReference type="GeneWiki" id="PLCD1"/>
<dbReference type="GenomeRNAi" id="5333"/>
<dbReference type="Pharos" id="P51178">
    <property type="development level" value="Tchem"/>
</dbReference>
<dbReference type="PRO" id="PR:P51178"/>
<dbReference type="Proteomes" id="UP000005640">
    <property type="component" value="Chromosome 3"/>
</dbReference>
<dbReference type="RNAct" id="P51178">
    <property type="molecule type" value="protein"/>
</dbReference>
<dbReference type="Bgee" id="ENSG00000187091">
    <property type="expression patterns" value="Expressed in olfactory bulb and 191 other cell types or tissues"/>
</dbReference>
<dbReference type="ExpressionAtlas" id="P51178">
    <property type="expression patterns" value="baseline and differential"/>
</dbReference>
<dbReference type="GO" id="GO:0005737">
    <property type="term" value="C:cytoplasm"/>
    <property type="evidence" value="ECO:0000314"/>
    <property type="project" value="MGI"/>
</dbReference>
<dbReference type="GO" id="GO:0070062">
    <property type="term" value="C:extracellular exosome"/>
    <property type="evidence" value="ECO:0007005"/>
    <property type="project" value="UniProtKB"/>
</dbReference>
<dbReference type="GO" id="GO:0005886">
    <property type="term" value="C:plasma membrane"/>
    <property type="evidence" value="ECO:0000318"/>
    <property type="project" value="GO_Central"/>
</dbReference>
<dbReference type="GO" id="GO:0005509">
    <property type="term" value="F:calcium ion binding"/>
    <property type="evidence" value="ECO:0007669"/>
    <property type="project" value="InterPro"/>
</dbReference>
<dbReference type="GO" id="GO:0032794">
    <property type="term" value="F:GTPase activating protein binding"/>
    <property type="evidence" value="ECO:0000353"/>
    <property type="project" value="BHF-UCL"/>
</dbReference>
<dbReference type="GO" id="GO:0070300">
    <property type="term" value="F:phosphatidic acid binding"/>
    <property type="evidence" value="ECO:0007669"/>
    <property type="project" value="Ensembl"/>
</dbReference>
<dbReference type="GO" id="GO:0005546">
    <property type="term" value="F:phosphatidylinositol-4,5-bisphosphate binding"/>
    <property type="evidence" value="ECO:0000314"/>
    <property type="project" value="UniProtKB"/>
</dbReference>
<dbReference type="GO" id="GO:0004435">
    <property type="term" value="F:phosphatidylinositol-4,5-bisphosphate phospholipase C activity"/>
    <property type="evidence" value="ECO:0000314"/>
    <property type="project" value="UniProtKB"/>
</dbReference>
<dbReference type="GO" id="GO:0001786">
    <property type="term" value="F:phosphatidylserine binding"/>
    <property type="evidence" value="ECO:0007669"/>
    <property type="project" value="Ensembl"/>
</dbReference>
<dbReference type="GO" id="GO:0016042">
    <property type="term" value="P:lipid catabolic process"/>
    <property type="evidence" value="ECO:0007669"/>
    <property type="project" value="UniProtKB-KW"/>
</dbReference>
<dbReference type="GO" id="GO:0046488">
    <property type="term" value="P:phosphatidylinositol metabolic process"/>
    <property type="evidence" value="ECO:0000314"/>
    <property type="project" value="UniProtKB"/>
</dbReference>
<dbReference type="GO" id="GO:0141212">
    <property type="term" value="P:phospholipase C/protein kinase C signal transduction"/>
    <property type="evidence" value="ECO:0000314"/>
    <property type="project" value="BHF-UCL"/>
</dbReference>
<dbReference type="GO" id="GO:0006644">
    <property type="term" value="P:phospholipid metabolic process"/>
    <property type="evidence" value="ECO:0000304"/>
    <property type="project" value="ProtInc"/>
</dbReference>
<dbReference type="CDD" id="cd00275">
    <property type="entry name" value="C2_PLC_like"/>
    <property type="match status" value="1"/>
</dbReference>
<dbReference type="CDD" id="cd16217">
    <property type="entry name" value="EFh_PI-PLCdelta1"/>
    <property type="match status" value="1"/>
</dbReference>
<dbReference type="CDD" id="cd13363">
    <property type="entry name" value="PH_PLC_delta"/>
    <property type="match status" value="1"/>
</dbReference>
<dbReference type="CDD" id="cd08593">
    <property type="entry name" value="PI-PLCc_delta"/>
    <property type="match status" value="1"/>
</dbReference>
<dbReference type="FunFam" id="1.10.238.10:FF:000071">
    <property type="entry name" value="Phosphoinositide phospholipase C"/>
    <property type="match status" value="1"/>
</dbReference>
<dbReference type="FunFam" id="1.10.238.10:FF:000144">
    <property type="entry name" value="Phosphoinositide phospholipase C"/>
    <property type="match status" value="1"/>
</dbReference>
<dbReference type="FunFam" id="2.30.29.30:FF:000088">
    <property type="entry name" value="Phosphoinositide phospholipase C"/>
    <property type="match status" value="1"/>
</dbReference>
<dbReference type="FunFam" id="2.60.40.150:FF:000098">
    <property type="entry name" value="Phosphoinositide phospholipase C"/>
    <property type="match status" value="1"/>
</dbReference>
<dbReference type="FunFam" id="3.20.20.190:FF:000018">
    <property type="entry name" value="Phosphoinositide phospholipase C"/>
    <property type="match status" value="1"/>
</dbReference>
<dbReference type="FunFam" id="3.20.20.190:FF:000019">
    <property type="entry name" value="Phosphoinositide phospholipase C"/>
    <property type="match status" value="1"/>
</dbReference>
<dbReference type="Gene3D" id="2.60.40.150">
    <property type="entry name" value="C2 domain"/>
    <property type="match status" value="1"/>
</dbReference>
<dbReference type="Gene3D" id="1.10.238.10">
    <property type="entry name" value="EF-hand"/>
    <property type="match status" value="2"/>
</dbReference>
<dbReference type="Gene3D" id="3.20.20.190">
    <property type="entry name" value="Phosphatidylinositol (PI) phosphodiesterase"/>
    <property type="match status" value="2"/>
</dbReference>
<dbReference type="Gene3D" id="2.30.29.30">
    <property type="entry name" value="Pleckstrin-homology domain (PH domain)/Phosphotyrosine-binding domain (PTB)"/>
    <property type="match status" value="1"/>
</dbReference>
<dbReference type="InterPro" id="IPR000008">
    <property type="entry name" value="C2_dom"/>
</dbReference>
<dbReference type="InterPro" id="IPR035892">
    <property type="entry name" value="C2_domain_sf"/>
</dbReference>
<dbReference type="InterPro" id="IPR011992">
    <property type="entry name" value="EF-hand-dom_pair"/>
</dbReference>
<dbReference type="InterPro" id="IPR018247">
    <property type="entry name" value="EF_Hand_1_Ca_BS"/>
</dbReference>
<dbReference type="InterPro" id="IPR002048">
    <property type="entry name" value="EF_hand_dom"/>
</dbReference>
<dbReference type="InterPro" id="IPR011993">
    <property type="entry name" value="PH-like_dom_sf"/>
</dbReference>
<dbReference type="InterPro" id="IPR001849">
    <property type="entry name" value="PH_domain"/>
</dbReference>
<dbReference type="InterPro" id="IPR001192">
    <property type="entry name" value="PI-PLC_fam"/>
</dbReference>
<dbReference type="InterPro" id="IPR028391">
    <property type="entry name" value="PLC-delta1_cat"/>
</dbReference>
<dbReference type="InterPro" id="IPR046975">
    <property type="entry name" value="PLC-delta1_EF"/>
</dbReference>
<dbReference type="InterPro" id="IPR017946">
    <property type="entry name" value="PLC-like_Pdiesterase_TIM-brl"/>
</dbReference>
<dbReference type="InterPro" id="IPR015359">
    <property type="entry name" value="PLC_EF-hand-like"/>
</dbReference>
<dbReference type="InterPro" id="IPR000909">
    <property type="entry name" value="PLipase_C_PInositol-sp_X_dom"/>
</dbReference>
<dbReference type="InterPro" id="IPR001711">
    <property type="entry name" value="PLipase_C_Pinositol-sp_Y"/>
</dbReference>
<dbReference type="PANTHER" id="PTHR10336:SF210">
    <property type="entry name" value="1-PHOSPHATIDYLINOSITOL 4,5-BISPHOSPHATE PHOSPHODIESTERASE DELTA-1"/>
    <property type="match status" value="1"/>
</dbReference>
<dbReference type="PANTHER" id="PTHR10336">
    <property type="entry name" value="PHOSPHOINOSITIDE-SPECIFIC PHOSPHOLIPASE C FAMILY PROTEIN"/>
    <property type="match status" value="1"/>
</dbReference>
<dbReference type="Pfam" id="PF00168">
    <property type="entry name" value="C2"/>
    <property type="match status" value="1"/>
</dbReference>
<dbReference type="Pfam" id="PF09279">
    <property type="entry name" value="EF-hand_like"/>
    <property type="match status" value="1"/>
</dbReference>
<dbReference type="Pfam" id="PF16457">
    <property type="entry name" value="PH_12"/>
    <property type="match status" value="1"/>
</dbReference>
<dbReference type="Pfam" id="PF00388">
    <property type="entry name" value="PI-PLC-X"/>
    <property type="match status" value="1"/>
</dbReference>
<dbReference type="Pfam" id="PF00387">
    <property type="entry name" value="PI-PLC-Y"/>
    <property type="match status" value="1"/>
</dbReference>
<dbReference type="PRINTS" id="PR00390">
    <property type="entry name" value="PHPHLIPASEC"/>
</dbReference>
<dbReference type="SMART" id="SM00239">
    <property type="entry name" value="C2"/>
    <property type="match status" value="1"/>
</dbReference>
<dbReference type="SMART" id="SM00054">
    <property type="entry name" value="EFh"/>
    <property type="match status" value="2"/>
</dbReference>
<dbReference type="SMART" id="SM00233">
    <property type="entry name" value="PH"/>
    <property type="match status" value="1"/>
</dbReference>
<dbReference type="SMART" id="SM00148">
    <property type="entry name" value="PLCXc"/>
    <property type="match status" value="1"/>
</dbReference>
<dbReference type="SMART" id="SM00149">
    <property type="entry name" value="PLCYc"/>
    <property type="match status" value="1"/>
</dbReference>
<dbReference type="SUPFAM" id="SSF49562">
    <property type="entry name" value="C2 domain (Calcium/lipid-binding domain, CaLB)"/>
    <property type="match status" value="1"/>
</dbReference>
<dbReference type="SUPFAM" id="SSF47473">
    <property type="entry name" value="EF-hand"/>
    <property type="match status" value="1"/>
</dbReference>
<dbReference type="SUPFAM" id="SSF50729">
    <property type="entry name" value="PH domain-like"/>
    <property type="match status" value="1"/>
</dbReference>
<dbReference type="SUPFAM" id="SSF51695">
    <property type="entry name" value="PLC-like phosphodiesterases"/>
    <property type="match status" value="1"/>
</dbReference>
<dbReference type="PROSITE" id="PS50004">
    <property type="entry name" value="C2"/>
    <property type="match status" value="1"/>
</dbReference>
<dbReference type="PROSITE" id="PS00018">
    <property type="entry name" value="EF_HAND_1"/>
    <property type="match status" value="2"/>
</dbReference>
<dbReference type="PROSITE" id="PS50222">
    <property type="entry name" value="EF_HAND_2"/>
    <property type="match status" value="2"/>
</dbReference>
<dbReference type="PROSITE" id="PS50003">
    <property type="entry name" value="PH_DOMAIN"/>
    <property type="match status" value="1"/>
</dbReference>
<dbReference type="PROSITE" id="PS50007">
    <property type="entry name" value="PIPLC_X_DOMAIN"/>
    <property type="match status" value="1"/>
</dbReference>
<dbReference type="PROSITE" id="PS50008">
    <property type="entry name" value="PIPLC_Y_DOMAIN"/>
    <property type="match status" value="1"/>
</dbReference>
<accession>P51178</accession>
<accession>B3KR14</accession>
<accession>Q86VN8</accession>
<protein>
    <recommendedName>
        <fullName evidence="13">1-phosphatidylinositol 4,5-bisphosphate phosphodiesterase delta-1</fullName>
        <ecNumber evidence="10 11">3.1.4.11</ecNumber>
    </recommendedName>
    <alternativeName>
        <fullName>Phosphoinositide phospholipase C-delta-1</fullName>
    </alternativeName>
    <alternativeName>
        <fullName>Phospholipase C-III</fullName>
        <shortName>PLC-III</shortName>
    </alternativeName>
    <alternativeName>
        <fullName>Phospholipase C-delta-1</fullName>
        <shortName>PLC-delta-1</shortName>
    </alternativeName>
</protein>
<gene>
    <name evidence="15" type="primary">PLCD1</name>
</gene>
<organism>
    <name type="scientific">Homo sapiens</name>
    <name type="common">Human</name>
    <dbReference type="NCBI Taxonomy" id="9606"/>
    <lineage>
        <taxon>Eukaryota</taxon>
        <taxon>Metazoa</taxon>
        <taxon>Chordata</taxon>
        <taxon>Craniata</taxon>
        <taxon>Vertebrata</taxon>
        <taxon>Euteleostomi</taxon>
        <taxon>Mammalia</taxon>
        <taxon>Eutheria</taxon>
        <taxon>Euarchontoglires</taxon>
        <taxon>Primates</taxon>
        <taxon>Haplorrhini</taxon>
        <taxon>Catarrhini</taxon>
        <taxon>Hominidae</taxon>
        <taxon>Homo</taxon>
    </lineage>
</organism>
<reference key="1">
    <citation type="journal article" date="1995" name="J. Biol. Chem.">
        <title>Cloning and identification of amino acid residues of human phospholipase C delta 1 essential for catalysis.</title>
        <authorList>
            <person name="Cheng H.F."/>
            <person name="Jiang M.J."/>
            <person name="Chen C.L."/>
            <person name="Liu S.M."/>
            <person name="Wong L.P."/>
            <person name="Lomasney J.W."/>
            <person name="King K."/>
        </authorList>
    </citation>
    <scope>NUCLEOTIDE SEQUENCE [MRNA] (ISOFORM 1)</scope>
    <scope>CATALYTIC ACTIVITY</scope>
    <scope>MUTAGENESIS OF GLU-327; ARG-338; GLU-341; HIS-356; SER-381; SER-388; LYS-434; LYS-440; LYS-441 AND ARG-549</scope>
    <scope>TISSUE SPECIFICITY</scope>
    <source>
        <tissue>Aorta</tissue>
    </source>
</reference>
<reference key="2">
    <citation type="journal article" date="2004" name="Nat. Genet.">
        <title>Complete sequencing and characterization of 21,243 full-length human cDNAs.</title>
        <authorList>
            <person name="Ota T."/>
            <person name="Suzuki Y."/>
            <person name="Nishikawa T."/>
            <person name="Otsuki T."/>
            <person name="Sugiyama T."/>
            <person name="Irie R."/>
            <person name="Wakamatsu A."/>
            <person name="Hayashi K."/>
            <person name="Sato H."/>
            <person name="Nagai K."/>
            <person name="Kimura K."/>
            <person name="Makita H."/>
            <person name="Sekine M."/>
            <person name="Obayashi M."/>
            <person name="Nishi T."/>
            <person name="Shibahara T."/>
            <person name="Tanaka T."/>
            <person name="Ishii S."/>
            <person name="Yamamoto J."/>
            <person name="Saito K."/>
            <person name="Kawai Y."/>
            <person name="Isono Y."/>
            <person name="Nakamura Y."/>
            <person name="Nagahari K."/>
            <person name="Murakami K."/>
            <person name="Yasuda T."/>
            <person name="Iwayanagi T."/>
            <person name="Wagatsuma M."/>
            <person name="Shiratori A."/>
            <person name="Sudo H."/>
            <person name="Hosoiri T."/>
            <person name="Kaku Y."/>
            <person name="Kodaira H."/>
            <person name="Kondo H."/>
            <person name="Sugawara M."/>
            <person name="Takahashi M."/>
            <person name="Kanda K."/>
            <person name="Yokoi T."/>
            <person name="Furuya T."/>
            <person name="Kikkawa E."/>
            <person name="Omura Y."/>
            <person name="Abe K."/>
            <person name="Kamihara K."/>
            <person name="Katsuta N."/>
            <person name="Sato K."/>
            <person name="Tanikawa M."/>
            <person name="Yamazaki M."/>
            <person name="Ninomiya K."/>
            <person name="Ishibashi T."/>
            <person name="Yamashita H."/>
            <person name="Murakawa K."/>
            <person name="Fujimori K."/>
            <person name="Tanai H."/>
            <person name="Kimata M."/>
            <person name="Watanabe M."/>
            <person name="Hiraoka S."/>
            <person name="Chiba Y."/>
            <person name="Ishida S."/>
            <person name="Ono Y."/>
            <person name="Takiguchi S."/>
            <person name="Watanabe S."/>
            <person name="Yosida M."/>
            <person name="Hotuta T."/>
            <person name="Kusano J."/>
            <person name="Kanehori K."/>
            <person name="Takahashi-Fujii A."/>
            <person name="Hara H."/>
            <person name="Tanase T.-O."/>
            <person name="Nomura Y."/>
            <person name="Togiya S."/>
            <person name="Komai F."/>
            <person name="Hara R."/>
            <person name="Takeuchi K."/>
            <person name="Arita M."/>
            <person name="Imose N."/>
            <person name="Musashino K."/>
            <person name="Yuuki H."/>
            <person name="Oshima A."/>
            <person name="Sasaki N."/>
            <person name="Aotsuka S."/>
            <person name="Yoshikawa Y."/>
            <person name="Matsunawa H."/>
            <person name="Ichihara T."/>
            <person name="Shiohata N."/>
            <person name="Sano S."/>
            <person name="Moriya S."/>
            <person name="Momiyama H."/>
            <person name="Satoh N."/>
            <person name="Takami S."/>
            <person name="Terashima Y."/>
            <person name="Suzuki O."/>
            <person name="Nakagawa S."/>
            <person name="Senoh A."/>
            <person name="Mizoguchi H."/>
            <person name="Goto Y."/>
            <person name="Shimizu F."/>
            <person name="Wakebe H."/>
            <person name="Hishigaki H."/>
            <person name="Watanabe T."/>
            <person name="Sugiyama A."/>
            <person name="Takemoto M."/>
            <person name="Kawakami B."/>
            <person name="Yamazaki M."/>
            <person name="Watanabe K."/>
            <person name="Kumagai A."/>
            <person name="Itakura S."/>
            <person name="Fukuzumi Y."/>
            <person name="Fujimori Y."/>
            <person name="Komiyama M."/>
            <person name="Tashiro H."/>
            <person name="Tanigami A."/>
            <person name="Fujiwara T."/>
            <person name="Ono T."/>
            <person name="Yamada K."/>
            <person name="Fujii Y."/>
            <person name="Ozaki K."/>
            <person name="Hirao M."/>
            <person name="Ohmori Y."/>
            <person name="Kawabata A."/>
            <person name="Hikiji T."/>
            <person name="Kobatake N."/>
            <person name="Inagaki H."/>
            <person name="Ikema Y."/>
            <person name="Okamoto S."/>
            <person name="Okitani R."/>
            <person name="Kawakami T."/>
            <person name="Noguchi S."/>
            <person name="Itoh T."/>
            <person name="Shigeta K."/>
            <person name="Senba T."/>
            <person name="Matsumura K."/>
            <person name="Nakajima Y."/>
            <person name="Mizuno T."/>
            <person name="Morinaga M."/>
            <person name="Sasaki M."/>
            <person name="Togashi T."/>
            <person name="Oyama M."/>
            <person name="Hata H."/>
            <person name="Watanabe M."/>
            <person name="Komatsu T."/>
            <person name="Mizushima-Sugano J."/>
            <person name="Satoh T."/>
            <person name="Shirai Y."/>
            <person name="Takahashi Y."/>
            <person name="Nakagawa K."/>
            <person name="Okumura K."/>
            <person name="Nagase T."/>
            <person name="Nomura N."/>
            <person name="Kikuchi H."/>
            <person name="Masuho Y."/>
            <person name="Yamashita R."/>
            <person name="Nakai K."/>
            <person name="Yada T."/>
            <person name="Nakamura Y."/>
            <person name="Ohara O."/>
            <person name="Isogai T."/>
            <person name="Sugano S."/>
        </authorList>
    </citation>
    <scope>NUCLEOTIDE SEQUENCE [LARGE SCALE MRNA] (ISOFORM 2)</scope>
    <source>
        <tissue>Amygdala</tissue>
    </source>
</reference>
<reference key="3">
    <citation type="journal article" date="2006" name="Nature">
        <title>The DNA sequence, annotation and analysis of human chromosome 3.</title>
        <authorList>
            <person name="Muzny D.M."/>
            <person name="Scherer S.E."/>
            <person name="Kaul R."/>
            <person name="Wang J."/>
            <person name="Yu J."/>
            <person name="Sudbrak R."/>
            <person name="Buhay C.J."/>
            <person name="Chen R."/>
            <person name="Cree A."/>
            <person name="Ding Y."/>
            <person name="Dugan-Rocha S."/>
            <person name="Gill R."/>
            <person name="Gunaratne P."/>
            <person name="Harris R.A."/>
            <person name="Hawes A.C."/>
            <person name="Hernandez J."/>
            <person name="Hodgson A.V."/>
            <person name="Hume J."/>
            <person name="Jackson A."/>
            <person name="Khan Z.M."/>
            <person name="Kovar-Smith C."/>
            <person name="Lewis L.R."/>
            <person name="Lozado R.J."/>
            <person name="Metzker M.L."/>
            <person name="Milosavljevic A."/>
            <person name="Miner G.R."/>
            <person name="Morgan M.B."/>
            <person name="Nazareth L.V."/>
            <person name="Scott G."/>
            <person name="Sodergren E."/>
            <person name="Song X.-Z."/>
            <person name="Steffen D."/>
            <person name="Wei S."/>
            <person name="Wheeler D.A."/>
            <person name="Wright M.W."/>
            <person name="Worley K.C."/>
            <person name="Yuan Y."/>
            <person name="Zhang Z."/>
            <person name="Adams C.Q."/>
            <person name="Ansari-Lari M.A."/>
            <person name="Ayele M."/>
            <person name="Brown M.J."/>
            <person name="Chen G."/>
            <person name="Chen Z."/>
            <person name="Clendenning J."/>
            <person name="Clerc-Blankenburg K.P."/>
            <person name="Chen R."/>
            <person name="Chen Z."/>
            <person name="Davis C."/>
            <person name="Delgado O."/>
            <person name="Dinh H.H."/>
            <person name="Dong W."/>
            <person name="Draper H."/>
            <person name="Ernst S."/>
            <person name="Fu G."/>
            <person name="Gonzalez-Garay M.L."/>
            <person name="Garcia D.K."/>
            <person name="Gillett W."/>
            <person name="Gu J."/>
            <person name="Hao B."/>
            <person name="Haugen E."/>
            <person name="Havlak P."/>
            <person name="He X."/>
            <person name="Hennig S."/>
            <person name="Hu S."/>
            <person name="Huang W."/>
            <person name="Jackson L.R."/>
            <person name="Jacob L.S."/>
            <person name="Kelly S.H."/>
            <person name="Kube M."/>
            <person name="Levy R."/>
            <person name="Li Z."/>
            <person name="Liu B."/>
            <person name="Liu J."/>
            <person name="Liu W."/>
            <person name="Lu J."/>
            <person name="Maheshwari M."/>
            <person name="Nguyen B.-V."/>
            <person name="Okwuonu G.O."/>
            <person name="Palmeiri A."/>
            <person name="Pasternak S."/>
            <person name="Perez L.M."/>
            <person name="Phelps K.A."/>
            <person name="Plopper F.J."/>
            <person name="Qiang B."/>
            <person name="Raymond C."/>
            <person name="Rodriguez R."/>
            <person name="Saenphimmachak C."/>
            <person name="Santibanez J."/>
            <person name="Shen H."/>
            <person name="Shen Y."/>
            <person name="Subramanian S."/>
            <person name="Tabor P.E."/>
            <person name="Verduzco D."/>
            <person name="Waldron L."/>
            <person name="Wang J."/>
            <person name="Wang J."/>
            <person name="Wang Q."/>
            <person name="Williams G.A."/>
            <person name="Wong G.K.-S."/>
            <person name="Yao Z."/>
            <person name="Zhang J."/>
            <person name="Zhang X."/>
            <person name="Zhao G."/>
            <person name="Zhou J."/>
            <person name="Zhou Y."/>
            <person name="Nelson D."/>
            <person name="Lehrach H."/>
            <person name="Reinhardt R."/>
            <person name="Naylor S.L."/>
            <person name="Yang H."/>
            <person name="Olson M."/>
            <person name="Weinstock G."/>
            <person name="Gibbs R.A."/>
        </authorList>
    </citation>
    <scope>NUCLEOTIDE SEQUENCE [LARGE SCALE GENOMIC DNA]</scope>
</reference>
<reference key="4">
    <citation type="submission" date="2005-07" db="EMBL/GenBank/DDBJ databases">
        <authorList>
            <person name="Mural R.J."/>
            <person name="Istrail S."/>
            <person name="Sutton G.G."/>
            <person name="Florea L."/>
            <person name="Halpern A.L."/>
            <person name="Mobarry C.M."/>
            <person name="Lippert R."/>
            <person name="Walenz B."/>
            <person name="Shatkay H."/>
            <person name="Dew I."/>
            <person name="Miller J.R."/>
            <person name="Flanigan M.J."/>
            <person name="Edwards N.J."/>
            <person name="Bolanos R."/>
            <person name="Fasulo D."/>
            <person name="Halldorsson B.V."/>
            <person name="Hannenhalli S."/>
            <person name="Turner R."/>
            <person name="Yooseph S."/>
            <person name="Lu F."/>
            <person name="Nusskern D.R."/>
            <person name="Shue B.C."/>
            <person name="Zheng X.H."/>
            <person name="Zhong F."/>
            <person name="Delcher A.L."/>
            <person name="Huson D.H."/>
            <person name="Kravitz S.A."/>
            <person name="Mouchard L."/>
            <person name="Reinert K."/>
            <person name="Remington K.A."/>
            <person name="Clark A.G."/>
            <person name="Waterman M.S."/>
            <person name="Eichler E.E."/>
            <person name="Adams M.D."/>
            <person name="Hunkapiller M.W."/>
            <person name="Myers E.W."/>
            <person name="Venter J.C."/>
        </authorList>
    </citation>
    <scope>NUCLEOTIDE SEQUENCE [LARGE SCALE GENOMIC DNA]</scope>
</reference>
<reference key="5">
    <citation type="journal article" date="2004" name="Genome Res.">
        <title>The status, quality, and expansion of the NIH full-length cDNA project: the Mammalian Gene Collection (MGC).</title>
        <authorList>
            <consortium name="The MGC Project Team"/>
        </authorList>
    </citation>
    <scope>NUCLEOTIDE SEQUENCE [LARGE SCALE MRNA] (ISOFORM 1)</scope>
    <source>
        <tissue>Brain</tissue>
    </source>
</reference>
<reference key="6">
    <citation type="journal article" date="1997" name="Biochemistry">
        <title>Phosphoinositide binding specificity among phospholipase C isozymes as determined by photo-cross-linking to novel substrate and product analogs.</title>
        <authorList>
            <person name="Tall E."/>
            <person name="Dorman G."/>
            <person name="Garcia P."/>
            <person name="Runnels L."/>
            <person name="Shah S."/>
            <person name="Chen J."/>
            <person name="Profit A."/>
            <person name="Gu Q.M."/>
            <person name="Chaudhary A."/>
            <person name="Prestwich G.D."/>
            <person name="Rebecchi M.J."/>
        </authorList>
    </citation>
    <scope>FUNCTION</scope>
    <scope>CATALYTIC ACTIVITY</scope>
</reference>
<reference key="7">
    <citation type="journal article" date="2013" name="J. Proteome Res.">
        <title>Toward a comprehensive characterization of a human cancer cell phosphoproteome.</title>
        <authorList>
            <person name="Zhou H."/>
            <person name="Di Palma S."/>
            <person name="Preisinger C."/>
            <person name="Peng M."/>
            <person name="Polat A.N."/>
            <person name="Heck A.J."/>
            <person name="Mohammed S."/>
        </authorList>
    </citation>
    <scope>PHOSPHORYLATION [LARGE SCALE ANALYSIS] AT SER-460</scope>
    <scope>IDENTIFICATION BY MASS SPECTROMETRY [LARGE SCALE ANALYSIS]</scope>
    <source>
        <tissue>Erythroleukemia</tissue>
    </source>
</reference>
<reference key="8">
    <citation type="journal article" date="2014" name="J. Proteomics">
        <title>An enzyme assisted RP-RPLC approach for in-depth analysis of human liver phosphoproteome.</title>
        <authorList>
            <person name="Bian Y."/>
            <person name="Song C."/>
            <person name="Cheng K."/>
            <person name="Dong M."/>
            <person name="Wang F."/>
            <person name="Huang J."/>
            <person name="Sun D."/>
            <person name="Wang L."/>
            <person name="Ye M."/>
            <person name="Zou H."/>
        </authorList>
    </citation>
    <scope>PHOSPHORYLATION [LARGE SCALE ANALYSIS] AT SER-460</scope>
    <scope>IDENTIFICATION BY MASS SPECTROMETRY [LARGE SCALE ANALYSIS]</scope>
    <source>
        <tissue>Liver</tissue>
    </source>
</reference>
<reference key="9">
    <citation type="journal article" date="2011" name="Am. J. Hum. Genet.">
        <title>Hereditary leukonychia, or porcelain nails, resulting from mutations in PLCD1.</title>
        <authorList>
            <person name="Kiuru M."/>
            <person name="Kurban M."/>
            <person name="Itoh M."/>
            <person name="Petukhova L."/>
            <person name="Shimomura Y."/>
            <person name="Wajid M."/>
            <person name="Christiano A.M."/>
        </authorList>
    </citation>
    <scope>VARIANTS NDNC3 ARG-209 AND THR-574</scope>
</reference>
<name>PLCD1_HUMAN</name>
<proteinExistence type="evidence at protein level"/>
<evidence type="ECO:0000250" key="1"/>
<evidence type="ECO:0000250" key="2">
    <source>
        <dbReference type="UniProtKB" id="P10688"/>
    </source>
</evidence>
<evidence type="ECO:0000250" key="3">
    <source>
        <dbReference type="UniProtKB" id="Q8R3B1"/>
    </source>
</evidence>
<evidence type="ECO:0000255" key="4">
    <source>
        <dbReference type="PROSITE-ProRule" id="PRU00041"/>
    </source>
</evidence>
<evidence type="ECO:0000255" key="5">
    <source>
        <dbReference type="PROSITE-ProRule" id="PRU00145"/>
    </source>
</evidence>
<evidence type="ECO:0000255" key="6">
    <source>
        <dbReference type="PROSITE-ProRule" id="PRU00270"/>
    </source>
</evidence>
<evidence type="ECO:0000255" key="7">
    <source>
        <dbReference type="PROSITE-ProRule" id="PRU00271"/>
    </source>
</evidence>
<evidence type="ECO:0000255" key="8">
    <source>
        <dbReference type="PROSITE-ProRule" id="PRU00448"/>
    </source>
</evidence>
<evidence type="ECO:0000269" key="9">
    <source>
    </source>
</evidence>
<evidence type="ECO:0000269" key="10">
    <source>
    </source>
</evidence>
<evidence type="ECO:0000269" key="11">
    <source>
    </source>
</evidence>
<evidence type="ECO:0000303" key="12">
    <source>
    </source>
</evidence>
<evidence type="ECO:0000305" key="13"/>
<evidence type="ECO:0000305" key="14">
    <source>
    </source>
</evidence>
<evidence type="ECO:0000312" key="15">
    <source>
        <dbReference type="HGNC" id="HGNC:9060"/>
    </source>
</evidence>
<evidence type="ECO:0007744" key="16">
    <source>
    </source>
</evidence>
<evidence type="ECO:0007744" key="17">
    <source>
    </source>
</evidence>
<sequence>MDSGRDFLTLHGLQDDEDLQALLKGSQLLKVKSSSWRRERFYKLQEDCKTIWQESRKVMRTPESQLFSIEDIQEVRMGHRTEGLEKFARDVPEDRCFSIVFKDQRNTLDLIAPSPADAQHWVLGLHKIIHHSGSMDQRQKLQHWIHSCLRKADKNKDNKMSFKELQNFLKELNIQVDDSYARKIFRECDHSQTDSLEDEEIEAFYKMLTQRVEIDRTFAEAAGSGETLSVDQLVTFLQHQQREEAAGPALALSLIERYEPSETAKAQRQMTKDGFLMYLLSADGSAFSLAHRRVYQDMGQPLSHYLVSSSHNTYLLEDQLAGPSSTEAYIRALCKGCRCLELDCWDGPNQEPIIYHGYTFTSKILFCDVLRAIRDYAFKASPYPVILSLENHCTLEQQRVMARHLHAILGPMLLNRPLDGVTNSLPSPEQLKGKILLKGKKLGGLLPPGGEGGPEATVVSDEDEAAEMEDEAVRSRVQHKPKEDKLRLAQELSDMVIYCKSVHFGGFSSPGTPGQAFYEMASFSENRALRLLQESGNGFVRHNVGHLSRIYPAGWRTDSSNYSPVEMWNGGCQIVALNFQTPGPEMDVYQGRFQDNGACGYVLKPAFLRDPNGTFNPRALAQGPWWARKRLNIRVISGQQLPKVNKNKNSIVDPKVTVEIHGVSRDVASRQTAVITNNGFNPWWDTEFAFEVVVPDLALIRFLVEDYDASSKNDFIGQSTIPLNSLKQGYRHVHLMSKNGDQHPSATLFVKISLQD</sequence>
<comment type="function">
    <text evidence="3 10 11">The production of the second messenger molecules diacylglycerol (DAG) and inositol 1,4,5-trisphosphate (IP3) is mediated by activated phosphatidylinositol-specific phospholipase C enzymes (PubMed:9188725). Essential for trophoblast and placental development (By similarity). Binds phosphatidylinositol 4,5-bisphosphate (PubMed:7890667, PubMed:9188725).</text>
</comment>
<comment type="catalytic activity">
    <reaction evidence="10 11">
        <text>a 1,2-diacyl-sn-glycero-3-phospho-(1D-myo-inositol-4,5-bisphosphate) + H2O = 1D-myo-inositol 1,4,5-trisphosphate + a 1,2-diacyl-sn-glycerol + H(+)</text>
        <dbReference type="Rhea" id="RHEA:33179"/>
        <dbReference type="ChEBI" id="CHEBI:15377"/>
        <dbReference type="ChEBI" id="CHEBI:15378"/>
        <dbReference type="ChEBI" id="CHEBI:17815"/>
        <dbReference type="ChEBI" id="CHEBI:58456"/>
        <dbReference type="ChEBI" id="CHEBI:203600"/>
        <dbReference type="EC" id="3.1.4.11"/>
    </reaction>
    <physiologicalReaction direction="left-to-right" evidence="10">
        <dbReference type="Rhea" id="RHEA:33180"/>
    </physiologicalReaction>
</comment>
<comment type="catalytic activity">
    <reaction evidence="10">
        <text>a 1,2-diacyl-sn-glycero-3-phospho-(1D-myo-inositol) + H2O = 1D-myo-inositol 1-phosphate + a 1,2-diacyl-sn-glycerol + H(+)</text>
        <dbReference type="Rhea" id="RHEA:43484"/>
        <dbReference type="ChEBI" id="CHEBI:15377"/>
        <dbReference type="ChEBI" id="CHEBI:15378"/>
        <dbReference type="ChEBI" id="CHEBI:17815"/>
        <dbReference type="ChEBI" id="CHEBI:57880"/>
        <dbReference type="ChEBI" id="CHEBI:58433"/>
    </reaction>
    <physiologicalReaction direction="left-to-right" evidence="10">
        <dbReference type="Rhea" id="RHEA:43485"/>
    </physiologicalReaction>
</comment>
<comment type="cofactor">
    <cofactor evidence="10">
        <name>Ca(2+)</name>
        <dbReference type="ChEBI" id="CHEBI:29108"/>
    </cofactor>
    <text evidence="14">Binds 5 Ca(2+) ions per subunit. Two of the Ca(2+) ions are bound to the C2 domain.</text>
</comment>
<comment type="subunit">
    <text evidence="2">Interacts with TGM2.</text>
</comment>
<comment type="interaction">
    <interactant intactId="EBI-4405387">
        <id>P51178</id>
    </interactant>
    <interactant intactId="EBI-740220">
        <id>O14964</id>
        <label>HGS</label>
    </interactant>
    <organismsDiffer>false</organismsDiffer>
    <experiments>3</experiments>
</comment>
<comment type="interaction">
    <interactant intactId="EBI-4405387">
        <id>P51178</id>
    </interactant>
    <interactant intactId="EBI-741158">
        <id>Q96HA8</id>
        <label>NTAQ1</label>
    </interactant>
    <organismsDiffer>false</organismsDiffer>
    <experiments>3</experiments>
</comment>
<comment type="alternative products">
    <event type="alternative splicing"/>
    <isoform>
        <id>P51178-1</id>
        <name>1</name>
        <sequence type="displayed"/>
    </isoform>
    <isoform>
        <id>P51178-2</id>
        <name>2</name>
        <sequence type="described" ref="VSP_042919"/>
    </isoform>
</comment>
<comment type="tissue specificity">
    <text evidence="10">Strongly expressed in lung, liver and heart. Also expressed at least in pancreas, kidney, skeletal muscle, placenta and brain.</text>
</comment>
<comment type="disease" evidence="9">
    <disease id="DI-03200">
        <name>Nail disorder, non-syndromic congenital, 3</name>
        <acronym>NDNC3</acronym>
        <description>A nail disorder characterized by a white appearance of the nail plate (true leukonychia), the nail bed (pseudoleukonychia), or neither (apparent leukonychia). Leukonychia may involve all of the nail (leukonychia totalis) or only part of the nail (leukonychia partialis), or can appear as one or more transverse bands (leukonychia striata) or white spots (leukonychia punctata).</description>
        <dbReference type="MIM" id="151600"/>
    </disease>
    <text>The disease is caused by variants affecting the gene represented in this entry.</text>
</comment>
<comment type="online information" name="Atlas of Genetics and Cytogenetics in Oncology and Haematology">
    <link uri="https://atlasgeneticsoncology.org/gene/43927/PLCD1"/>
</comment>
<keyword id="KW-0025">Alternative splicing</keyword>
<keyword id="KW-0106">Calcium</keyword>
<keyword id="KW-0225">Disease variant</keyword>
<keyword id="KW-0325">Glycoprotein</keyword>
<keyword id="KW-0378">Hydrolase</keyword>
<keyword id="KW-0442">Lipid degradation</keyword>
<keyword id="KW-0443">Lipid metabolism</keyword>
<keyword id="KW-0479">Metal-binding</keyword>
<keyword id="KW-0597">Phosphoprotein</keyword>
<keyword id="KW-1267">Proteomics identification</keyword>
<keyword id="KW-1185">Reference proteome</keyword>
<keyword id="KW-0677">Repeat</keyword>
<keyword id="KW-0807">Transducer</keyword>
<feature type="chain" id="PRO_0000088504" description="1-phosphatidylinositol 4,5-bisphosphate phosphodiesterase delta-1">
    <location>
        <begin position="1"/>
        <end position="756"/>
    </location>
</feature>
<feature type="domain" description="PH" evidence="5">
    <location>
        <begin position="21"/>
        <end position="130"/>
    </location>
</feature>
<feature type="domain" description="EF-hand 1" evidence="8">
    <location>
        <begin position="140"/>
        <end position="175"/>
    </location>
</feature>
<feature type="domain" description="EF-hand 2" evidence="8">
    <location>
        <begin position="176"/>
        <end position="211"/>
    </location>
</feature>
<feature type="domain" description="PI-PLC X-box" evidence="6">
    <location>
        <begin position="296"/>
        <end position="440"/>
    </location>
</feature>
<feature type="domain" description="PI-PLC Y-box" evidence="7">
    <location>
        <begin position="492"/>
        <end position="609"/>
    </location>
</feature>
<feature type="domain" description="C2" evidence="4">
    <location>
        <begin position="611"/>
        <end position="737"/>
    </location>
</feature>
<feature type="region of interest" description="Substrate binding" evidence="1">
    <location>
        <begin position="30"/>
        <end position="57"/>
    </location>
</feature>
<feature type="active site" evidence="6">
    <location>
        <position position="311"/>
    </location>
</feature>
<feature type="active site" evidence="6">
    <location>
        <position position="356"/>
    </location>
</feature>
<feature type="binding site" evidence="8">
    <location>
        <position position="153"/>
    </location>
    <ligand>
        <name>Ca(2+)</name>
        <dbReference type="ChEBI" id="CHEBI:29108"/>
        <label>1</label>
    </ligand>
</feature>
<feature type="binding site" evidence="8">
    <location>
        <position position="155"/>
    </location>
    <ligand>
        <name>Ca(2+)</name>
        <dbReference type="ChEBI" id="CHEBI:29108"/>
        <label>1</label>
    </ligand>
</feature>
<feature type="binding site" evidence="8">
    <location>
        <position position="157"/>
    </location>
    <ligand>
        <name>Ca(2+)</name>
        <dbReference type="ChEBI" id="CHEBI:29108"/>
        <label>1</label>
    </ligand>
</feature>
<feature type="binding site" evidence="8">
    <location>
        <position position="159"/>
    </location>
    <ligand>
        <name>Ca(2+)</name>
        <dbReference type="ChEBI" id="CHEBI:29108"/>
        <label>1</label>
    </ligand>
</feature>
<feature type="binding site" evidence="8">
    <location>
        <position position="164"/>
    </location>
    <ligand>
        <name>Ca(2+)</name>
        <dbReference type="ChEBI" id="CHEBI:29108"/>
        <label>1</label>
    </ligand>
</feature>
<feature type="binding site" evidence="8">
    <location>
        <position position="189"/>
    </location>
    <ligand>
        <name>Ca(2+)</name>
        <dbReference type="ChEBI" id="CHEBI:29108"/>
        <label>2</label>
    </ligand>
</feature>
<feature type="binding site" evidence="8">
    <location>
        <position position="191"/>
    </location>
    <ligand>
        <name>Ca(2+)</name>
        <dbReference type="ChEBI" id="CHEBI:29108"/>
        <label>2</label>
    </ligand>
</feature>
<feature type="binding site" evidence="8">
    <location>
        <position position="193"/>
    </location>
    <ligand>
        <name>Ca(2+)</name>
        <dbReference type="ChEBI" id="CHEBI:29108"/>
        <label>2</label>
    </ligand>
</feature>
<feature type="binding site" evidence="8">
    <location>
        <position position="195"/>
    </location>
    <ligand>
        <name>Ca(2+)</name>
        <dbReference type="ChEBI" id="CHEBI:29108"/>
        <label>2</label>
    </ligand>
</feature>
<feature type="binding site" evidence="8">
    <location>
        <position position="200"/>
    </location>
    <ligand>
        <name>Ca(2+)</name>
        <dbReference type="ChEBI" id="CHEBI:29108"/>
        <label>2</label>
    </ligand>
</feature>
<feature type="binding site" evidence="1">
    <location>
        <position position="312"/>
    </location>
    <ligand>
        <name>Ca(2+)</name>
        <dbReference type="ChEBI" id="CHEBI:29108"/>
        <label>3</label>
        <note>catalytic</note>
    </ligand>
</feature>
<feature type="binding site" evidence="1">
    <location>
        <position position="341"/>
    </location>
    <ligand>
        <name>Ca(2+)</name>
        <dbReference type="ChEBI" id="CHEBI:29108"/>
        <label>3</label>
        <note>catalytic</note>
    </ligand>
</feature>
<feature type="binding site" evidence="1">
    <location>
        <position position="343"/>
    </location>
    <ligand>
        <name>Ca(2+)</name>
        <dbReference type="ChEBI" id="CHEBI:29108"/>
        <label>3</label>
        <note>catalytic</note>
    </ligand>
</feature>
<feature type="binding site" evidence="1">
    <location>
        <position position="390"/>
    </location>
    <ligand>
        <name>Ca(2+)</name>
        <dbReference type="ChEBI" id="CHEBI:29108"/>
        <label>3</label>
        <note>catalytic</note>
    </ligand>
</feature>
<feature type="binding site" evidence="1">
    <location>
        <position position="438"/>
    </location>
    <ligand>
        <name>substrate</name>
    </ligand>
</feature>
<feature type="binding site" evidence="1">
    <location>
        <position position="440"/>
    </location>
    <ligand>
        <name>substrate</name>
    </ligand>
</feature>
<feature type="binding site" evidence="1">
    <location>
        <position position="522"/>
    </location>
    <ligand>
        <name>substrate</name>
    </ligand>
</feature>
<feature type="binding site" evidence="1">
    <location>
        <position position="549"/>
    </location>
    <ligand>
        <name>substrate</name>
    </ligand>
</feature>
<feature type="binding site" evidence="1">
    <location>
        <position position="651"/>
    </location>
    <ligand>
        <name>Ca(2+)</name>
        <dbReference type="ChEBI" id="CHEBI:29108"/>
        <label>4</label>
    </ligand>
</feature>
<feature type="binding site" evidence="1">
    <location>
        <position position="653"/>
    </location>
    <ligand>
        <name>Ca(2+)</name>
        <dbReference type="ChEBI" id="CHEBI:29108"/>
        <label>4</label>
    </ligand>
</feature>
<feature type="binding site" evidence="1">
    <location>
        <position position="677"/>
    </location>
    <ligand>
        <name>Ca(2+)</name>
        <dbReference type="ChEBI" id="CHEBI:29108"/>
        <label>4</label>
    </ligand>
</feature>
<feature type="binding site" evidence="1">
    <location>
        <position position="706"/>
    </location>
    <ligand>
        <name>Ca(2+)</name>
        <dbReference type="ChEBI" id="CHEBI:29108"/>
        <label>5</label>
    </ligand>
</feature>
<feature type="binding site" evidence="1">
    <location>
        <position position="707"/>
    </location>
    <ligand>
        <name>Ca(2+)</name>
        <dbReference type="ChEBI" id="CHEBI:29108"/>
        <label>5</label>
    </ligand>
</feature>
<feature type="binding site" evidence="1">
    <location>
        <position position="708"/>
    </location>
    <ligand>
        <name>Ca(2+)</name>
        <dbReference type="ChEBI" id="CHEBI:29108"/>
        <label>5</label>
    </ligand>
</feature>
<feature type="modified residue" description="Phosphothreonine" evidence="3">
    <location>
        <position position="457"/>
    </location>
</feature>
<feature type="modified residue" description="Phosphoserine" evidence="16 17">
    <location>
        <position position="460"/>
    </location>
</feature>
<feature type="glycosylation site" description="O-linked (GlcNAc) serine" evidence="1">
    <location>
        <position position="191"/>
    </location>
</feature>
<feature type="glycosylation site" description="O-linked (GlcNAc) threonine" evidence="1">
    <location>
        <position position="193"/>
    </location>
</feature>
<feature type="splice variant" id="VSP_042919" description="In isoform 2." evidence="12">
    <original>MDSGRDFLTLH</original>
    <variation>MQCLGIRSRSRSRELYLQERSLKVAALNGRRL</variation>
    <location>
        <begin position="1"/>
        <end position="11"/>
    </location>
</feature>
<feature type="sequence variant" id="VAR_066399" description="In NDNC3." evidence="9">
    <original>T</original>
    <variation>R</variation>
    <location>
        <position position="209"/>
    </location>
</feature>
<feature type="sequence variant" id="VAR_046560" description="In dbSNP:rs933135.">
    <original>R</original>
    <variation>H</variation>
    <location>
        <position position="257"/>
    </location>
</feature>
<feature type="sequence variant" id="VAR_066400" description="In NDNC3." evidence="9">
    <original>I</original>
    <variation>T</variation>
    <location>
        <position position="574"/>
    </location>
</feature>
<feature type="mutagenesis site" description="No effect on hydrolysis inositol phospholipids." evidence="10">
    <original>E</original>
    <variation>G</variation>
    <location>
        <position position="327"/>
    </location>
</feature>
<feature type="mutagenesis site" description="Abolishes hydrolysis inositol phospholipids. No effect on binding to phosphatidylinositol 4,5-bisphosphate." evidence="10">
    <original>R</original>
    <variation>L</variation>
    <location>
        <position position="338"/>
    </location>
</feature>
<feature type="mutagenesis site" description="Abolishes hydrolysis inositol phospholipids. No effect on binding to phosphatidylinositol 4,5-bisphosphate." evidence="10">
    <original>E</original>
    <variation>G</variation>
    <location>
        <position position="341"/>
    </location>
</feature>
<feature type="mutagenesis site" description="Abolishes hydrolysis inositol phospholipids. No effect on binding to phosphatidylinositol 4,5-bisphosphate." evidence="10">
    <original>H</original>
    <variation>L</variation>
    <location>
        <position position="356"/>
    </location>
</feature>
<feature type="mutagenesis site" description="Decreases hydrolysis inositol phospholipids." evidence="10">
    <original>S</original>
    <variation>A</variation>
    <location>
        <position position="381"/>
    </location>
</feature>
<feature type="mutagenesis site" description="No effect on hydrolysis inositol phospholipids." evidence="10">
    <original>S</original>
    <variation>A</variation>
    <location>
        <position position="388"/>
    </location>
</feature>
<feature type="mutagenesis site" description="Decreases on hydrolysis inositol phospholipids." evidence="10">
    <original>K</original>
    <variation>Q</variation>
    <location>
        <position position="434"/>
    </location>
</feature>
<feature type="mutagenesis site" description="No effect on hydrolysis inositol phospholipids." evidence="10">
    <original>K</original>
    <variation>Q</variation>
    <location>
        <position position="440"/>
    </location>
</feature>
<feature type="mutagenesis site" description="Decreases on hydrolysis inositol phospholipids." evidence="10">
    <original>K</original>
    <variation>Q</variation>
    <location>
        <position position="441"/>
    </location>
</feature>
<feature type="mutagenesis site" description="Decreases on hydrolysis inositol phospholipids." evidence="10">
    <original>R</original>
    <variation>G</variation>
    <location>
        <position position="549"/>
    </location>
</feature>
<feature type="sequence conflict" description="In Ref. 1; AAA73567." evidence="13" ref="1">
    <original>S</original>
    <variation>P</variation>
    <location>
        <position position="224"/>
    </location>
</feature>
<feature type="sequence conflict" description="In Ref. 1; AAA73567." evidence="13" ref="1">
    <original>A</original>
    <variation>T</variation>
    <location>
        <position position="264"/>
    </location>
</feature>
<feature type="sequence conflict" description="In Ref. 1; AAA73567." evidence="13" ref="1">
    <original>G</original>
    <variation>D</variation>
    <location>
        <position position="591"/>
    </location>
</feature>